<gene>
    <name type="primary">ANKMY2</name>
</gene>
<reference key="1">
    <citation type="journal article" date="2007" name="BMC Genomics">
        <title>The full-ORF clone resource of the German cDNA consortium.</title>
        <authorList>
            <person name="Bechtel S."/>
            <person name="Rosenfelder H."/>
            <person name="Duda A."/>
            <person name="Schmidt C.P."/>
            <person name="Ernst U."/>
            <person name="Wellenreuther R."/>
            <person name="Mehrle A."/>
            <person name="Schuster C."/>
            <person name="Bahr A."/>
            <person name="Bloecker H."/>
            <person name="Heubner D."/>
            <person name="Hoerlein A."/>
            <person name="Michel G."/>
            <person name="Wedler H."/>
            <person name="Koehrer K."/>
            <person name="Ottenwaelder B."/>
            <person name="Poustka A."/>
            <person name="Wiemann S."/>
            <person name="Schupp I."/>
        </authorList>
    </citation>
    <scope>NUCLEOTIDE SEQUENCE [LARGE SCALE MRNA]</scope>
    <source>
        <tissue>Brain</tissue>
    </source>
</reference>
<reference key="2">
    <citation type="journal article" date="2003" name="Science">
        <title>Human chromosome 7: DNA sequence and biology.</title>
        <authorList>
            <person name="Scherer S.W."/>
            <person name="Cheung J."/>
            <person name="MacDonald J.R."/>
            <person name="Osborne L.R."/>
            <person name="Nakabayashi K."/>
            <person name="Herbrick J.-A."/>
            <person name="Carson A.R."/>
            <person name="Parker-Katiraee L."/>
            <person name="Skaug J."/>
            <person name="Khaja R."/>
            <person name="Zhang J."/>
            <person name="Hudek A.K."/>
            <person name="Li M."/>
            <person name="Haddad M."/>
            <person name="Duggan G.E."/>
            <person name="Fernandez B.A."/>
            <person name="Kanematsu E."/>
            <person name="Gentles S."/>
            <person name="Christopoulos C.C."/>
            <person name="Choufani S."/>
            <person name="Kwasnicka D."/>
            <person name="Zheng X.H."/>
            <person name="Lai Z."/>
            <person name="Nusskern D.R."/>
            <person name="Zhang Q."/>
            <person name="Gu Z."/>
            <person name="Lu F."/>
            <person name="Zeesman S."/>
            <person name="Nowaczyk M.J."/>
            <person name="Teshima I."/>
            <person name="Chitayat D."/>
            <person name="Shuman C."/>
            <person name="Weksberg R."/>
            <person name="Zackai E.H."/>
            <person name="Grebe T.A."/>
            <person name="Cox S.R."/>
            <person name="Kirkpatrick S.J."/>
            <person name="Rahman N."/>
            <person name="Friedman J.M."/>
            <person name="Heng H.H.Q."/>
            <person name="Pelicci P.G."/>
            <person name="Lo-Coco F."/>
            <person name="Belloni E."/>
            <person name="Shaffer L.G."/>
            <person name="Pober B."/>
            <person name="Morton C.C."/>
            <person name="Gusella J.F."/>
            <person name="Bruns G.A.P."/>
            <person name="Korf B.R."/>
            <person name="Quade B.J."/>
            <person name="Ligon A.H."/>
            <person name="Ferguson H."/>
            <person name="Higgins A.W."/>
            <person name="Leach N.T."/>
            <person name="Herrick S.R."/>
            <person name="Lemyre E."/>
            <person name="Farra C.G."/>
            <person name="Kim H.-G."/>
            <person name="Summers A.M."/>
            <person name="Gripp K.W."/>
            <person name="Roberts W."/>
            <person name="Szatmari P."/>
            <person name="Winsor E.J.T."/>
            <person name="Grzeschik K.-H."/>
            <person name="Teebi A."/>
            <person name="Minassian B.A."/>
            <person name="Kere J."/>
            <person name="Armengol L."/>
            <person name="Pujana M.A."/>
            <person name="Estivill X."/>
            <person name="Wilson M.D."/>
            <person name="Koop B.F."/>
            <person name="Tosi S."/>
            <person name="Moore G.E."/>
            <person name="Boright A.P."/>
            <person name="Zlotorynski E."/>
            <person name="Kerem B."/>
            <person name="Kroisel P.M."/>
            <person name="Petek E."/>
            <person name="Oscier D.G."/>
            <person name="Mould S.J."/>
            <person name="Doehner H."/>
            <person name="Doehner K."/>
            <person name="Rommens J.M."/>
            <person name="Vincent J.B."/>
            <person name="Venter J.C."/>
            <person name="Li P.W."/>
            <person name="Mural R.J."/>
            <person name="Adams M.D."/>
            <person name="Tsui L.-C."/>
        </authorList>
    </citation>
    <scope>NUCLEOTIDE SEQUENCE [LARGE SCALE GENOMIC DNA]</scope>
</reference>
<reference key="3">
    <citation type="submission" date="2005-07" db="EMBL/GenBank/DDBJ databases">
        <authorList>
            <person name="Mural R.J."/>
            <person name="Istrail S."/>
            <person name="Sutton G.G."/>
            <person name="Florea L."/>
            <person name="Halpern A.L."/>
            <person name="Mobarry C.M."/>
            <person name="Lippert R."/>
            <person name="Walenz B."/>
            <person name="Shatkay H."/>
            <person name="Dew I."/>
            <person name="Miller J.R."/>
            <person name="Flanigan M.J."/>
            <person name="Edwards N.J."/>
            <person name="Bolanos R."/>
            <person name="Fasulo D."/>
            <person name="Halldorsson B.V."/>
            <person name="Hannenhalli S."/>
            <person name="Turner R."/>
            <person name="Yooseph S."/>
            <person name="Lu F."/>
            <person name="Nusskern D.R."/>
            <person name="Shue B.C."/>
            <person name="Zheng X.H."/>
            <person name="Zhong F."/>
            <person name="Delcher A.L."/>
            <person name="Huson D.H."/>
            <person name="Kravitz S.A."/>
            <person name="Mouchard L."/>
            <person name="Reinert K."/>
            <person name="Remington K.A."/>
            <person name="Clark A.G."/>
            <person name="Waterman M.S."/>
            <person name="Eichler E.E."/>
            <person name="Adams M.D."/>
            <person name="Hunkapiller M.W."/>
            <person name="Myers E.W."/>
            <person name="Venter J.C."/>
        </authorList>
    </citation>
    <scope>NUCLEOTIDE SEQUENCE [LARGE SCALE GENOMIC DNA]</scope>
</reference>
<reference key="4">
    <citation type="journal article" date="2004" name="Genome Res.">
        <title>The status, quality, and expansion of the NIH full-length cDNA project: the Mammalian Gene Collection (MGC).</title>
        <authorList>
            <consortium name="The MGC Project Team"/>
        </authorList>
    </citation>
    <scope>NUCLEOTIDE SEQUENCE [LARGE SCALE MRNA]</scope>
    <source>
        <tissue>Colon</tissue>
        <tissue>Prostate</tissue>
    </source>
</reference>
<reference key="5">
    <citation type="journal article" date="2011" name="BMC Syst. Biol.">
        <title>Initial characterization of the human central proteome.</title>
        <authorList>
            <person name="Burkard T.R."/>
            <person name="Planyavsky M."/>
            <person name="Kaupe I."/>
            <person name="Breitwieser F.P."/>
            <person name="Buerckstuemmer T."/>
            <person name="Bennett K.L."/>
            <person name="Superti-Furga G."/>
            <person name="Colinge J."/>
        </authorList>
    </citation>
    <scope>IDENTIFICATION BY MASS SPECTROMETRY [LARGE SCALE ANALYSIS]</scope>
</reference>
<organism>
    <name type="scientific">Homo sapiens</name>
    <name type="common">Human</name>
    <dbReference type="NCBI Taxonomy" id="9606"/>
    <lineage>
        <taxon>Eukaryota</taxon>
        <taxon>Metazoa</taxon>
        <taxon>Chordata</taxon>
        <taxon>Craniata</taxon>
        <taxon>Vertebrata</taxon>
        <taxon>Euteleostomi</taxon>
        <taxon>Mammalia</taxon>
        <taxon>Eutheria</taxon>
        <taxon>Euarchontoglires</taxon>
        <taxon>Primates</taxon>
        <taxon>Haplorrhini</taxon>
        <taxon>Catarrhini</taxon>
        <taxon>Hominidae</taxon>
        <taxon>Homo</taxon>
    </lineage>
</organism>
<evidence type="ECO:0000250" key="1"/>
<evidence type="ECO:0000255" key="2">
    <source>
        <dbReference type="PROSITE-ProRule" id="PRU00134"/>
    </source>
</evidence>
<evidence type="ECO:0000256" key="3">
    <source>
        <dbReference type="SAM" id="MobiDB-lite"/>
    </source>
</evidence>
<evidence type="ECO:0000305" key="4"/>
<protein>
    <recommendedName>
        <fullName>Ankyrin repeat and MYND domain-containing protein 2</fullName>
    </recommendedName>
</protein>
<sequence>MVHIKKGELTQEEKELLEVIGKGTVQEAGTLLSSKNVRVNCLDENGMTPLMHAAYKGKLDMCKLLLRHGADVNCHQHEHGYTALMFAALSGNKDITWVMLEAGAETDVVNSVGRTAAQMAAFVGQHDCVTIINNFFPRERLDYYTKPQGLDKEPKLPPKLAGPLHKIITTTNLHPVKIVMLVNENPLLTEEAALNKCYRVMDLICEKCMKQRDMNEVLAMKMHYISCIFQKCINFLKDGENKLDTLIKSLLKGRASDGFPVYQEKIIRESIRKFPYCEATLLQQLVRSIAPVEIGSDPTAFSVLTQAITGQVGFVDVEFCTTCGEKGASKRCSVCKMVIYCDQTCQKTHWFTHKKICKNLKDIYEKQQLEAAKEKRQEENHGKLDVNSNCVNEEQPEAEVGISQKDSNPEDSGEGKKESLESEAELEGLQDAPAGPQVSEE</sequence>
<feature type="chain" id="PRO_0000247166" description="Ankyrin repeat and MYND domain-containing protein 2">
    <location>
        <begin position="1"/>
        <end position="441"/>
    </location>
</feature>
<feature type="repeat" description="ANK 1">
    <location>
        <begin position="45"/>
        <end position="74"/>
    </location>
</feature>
<feature type="repeat" description="ANK 2">
    <location>
        <begin position="79"/>
        <end position="108"/>
    </location>
</feature>
<feature type="repeat" description="ANK 3">
    <location>
        <begin position="159"/>
        <end position="188"/>
    </location>
</feature>
<feature type="zinc finger region" description="MYND-type" evidence="2">
    <location>
        <begin position="320"/>
        <end position="357"/>
    </location>
</feature>
<feature type="region of interest" description="Disordered" evidence="3">
    <location>
        <begin position="374"/>
        <end position="441"/>
    </location>
</feature>
<feature type="compositionally biased region" description="Basic and acidic residues" evidence="3">
    <location>
        <begin position="374"/>
        <end position="384"/>
    </location>
</feature>
<feature type="binding site" evidence="2">
    <location>
        <position position="320"/>
    </location>
    <ligand>
        <name>Zn(2+)</name>
        <dbReference type="ChEBI" id="CHEBI:29105"/>
        <label>1</label>
    </ligand>
</feature>
<feature type="binding site" evidence="2">
    <location>
        <position position="323"/>
    </location>
    <ligand>
        <name>Zn(2+)</name>
        <dbReference type="ChEBI" id="CHEBI:29105"/>
        <label>1</label>
    </ligand>
</feature>
<feature type="binding site" evidence="2">
    <location>
        <position position="332"/>
    </location>
    <ligand>
        <name>Zn(2+)</name>
        <dbReference type="ChEBI" id="CHEBI:29105"/>
        <label>2</label>
    </ligand>
</feature>
<feature type="binding site" evidence="2">
    <location>
        <position position="335"/>
    </location>
    <ligand>
        <name>Zn(2+)</name>
        <dbReference type="ChEBI" id="CHEBI:29105"/>
        <label>2</label>
    </ligand>
</feature>
<feature type="binding site" evidence="2">
    <location>
        <position position="341"/>
    </location>
    <ligand>
        <name>Zn(2+)</name>
        <dbReference type="ChEBI" id="CHEBI:29105"/>
        <label>1</label>
    </ligand>
</feature>
<feature type="binding site" evidence="2">
    <location>
        <position position="345"/>
    </location>
    <ligand>
        <name>Zn(2+)</name>
        <dbReference type="ChEBI" id="CHEBI:29105"/>
        <label>1</label>
    </ligand>
</feature>
<feature type="binding site" evidence="2">
    <location>
        <position position="353"/>
    </location>
    <ligand>
        <name>Zn(2+)</name>
        <dbReference type="ChEBI" id="CHEBI:29105"/>
        <label>2</label>
    </ligand>
</feature>
<feature type="binding site" evidence="2">
    <location>
        <position position="357"/>
    </location>
    <ligand>
        <name>Zn(2+)</name>
        <dbReference type="ChEBI" id="CHEBI:29105"/>
        <label>2</label>
    </ligand>
</feature>
<feature type="sequence conflict" description="In Ref. 1; CAH56419." evidence="4" ref="1">
    <original>K</original>
    <variation>KISLLMAFQCIKKRSLEKVSEK</variation>
    <location>
        <position position="273"/>
    </location>
</feature>
<dbReference type="EMBL" id="AL050390">
    <property type="protein sequence ID" value="CAH56419.1"/>
    <property type="molecule type" value="mRNA"/>
</dbReference>
<dbReference type="EMBL" id="CH236948">
    <property type="protein sequence ID" value="EAL24286.1"/>
    <property type="molecule type" value="Genomic_DNA"/>
</dbReference>
<dbReference type="EMBL" id="CH471073">
    <property type="protein sequence ID" value="EAW93672.1"/>
    <property type="molecule type" value="Genomic_DNA"/>
</dbReference>
<dbReference type="EMBL" id="BC015453">
    <property type="protein sequence ID" value="AAH15453.1"/>
    <property type="molecule type" value="mRNA"/>
</dbReference>
<dbReference type="EMBL" id="BC035353">
    <property type="protein sequence ID" value="AAH35353.1"/>
    <property type="molecule type" value="mRNA"/>
</dbReference>
<dbReference type="CCDS" id="CCDS5361.1"/>
<dbReference type="RefSeq" id="NP_064715.1">
    <property type="nucleotide sequence ID" value="NM_020319.3"/>
</dbReference>
<dbReference type="SMR" id="Q8IV38"/>
<dbReference type="BioGRID" id="121333">
    <property type="interactions" value="68"/>
</dbReference>
<dbReference type="FunCoup" id="Q8IV38">
    <property type="interactions" value="2531"/>
</dbReference>
<dbReference type="IntAct" id="Q8IV38">
    <property type="interactions" value="29"/>
</dbReference>
<dbReference type="STRING" id="9606.ENSP00000303570"/>
<dbReference type="GlyGen" id="Q8IV38">
    <property type="glycosylation" value="1 site, 1 O-linked glycan (1 site)"/>
</dbReference>
<dbReference type="iPTMnet" id="Q8IV38"/>
<dbReference type="PhosphoSitePlus" id="Q8IV38"/>
<dbReference type="BioMuta" id="ANKMY2"/>
<dbReference type="DMDM" id="74750650"/>
<dbReference type="jPOST" id="Q8IV38"/>
<dbReference type="MassIVE" id="Q8IV38"/>
<dbReference type="PaxDb" id="9606-ENSP00000303570"/>
<dbReference type="PeptideAtlas" id="Q8IV38"/>
<dbReference type="ProteomicsDB" id="70655"/>
<dbReference type="Pumba" id="Q8IV38"/>
<dbReference type="Antibodypedia" id="43960">
    <property type="antibodies" value="192 antibodies from 19 providers"/>
</dbReference>
<dbReference type="DNASU" id="57037"/>
<dbReference type="Ensembl" id="ENST00000306999.7">
    <property type="protein sequence ID" value="ENSP00000303570.2"/>
    <property type="gene ID" value="ENSG00000106524.9"/>
</dbReference>
<dbReference type="GeneID" id="57037"/>
<dbReference type="KEGG" id="hsa:57037"/>
<dbReference type="MANE-Select" id="ENST00000306999.7">
    <property type="protein sequence ID" value="ENSP00000303570.2"/>
    <property type="RefSeq nucleotide sequence ID" value="NM_020319.3"/>
    <property type="RefSeq protein sequence ID" value="NP_064715.1"/>
</dbReference>
<dbReference type="UCSC" id="uc003sti.3">
    <property type="organism name" value="human"/>
</dbReference>
<dbReference type="AGR" id="HGNC:25370"/>
<dbReference type="CTD" id="57037"/>
<dbReference type="DisGeNET" id="57037"/>
<dbReference type="GeneCards" id="ANKMY2"/>
<dbReference type="HGNC" id="HGNC:25370">
    <property type="gene designation" value="ANKMY2"/>
</dbReference>
<dbReference type="HPA" id="ENSG00000106524">
    <property type="expression patterns" value="Low tissue specificity"/>
</dbReference>
<dbReference type="neXtProt" id="NX_Q8IV38"/>
<dbReference type="OpenTargets" id="ENSG00000106524"/>
<dbReference type="PharmGKB" id="PA134893861"/>
<dbReference type="VEuPathDB" id="HostDB:ENSG00000106524"/>
<dbReference type="eggNOG" id="KOG1710">
    <property type="taxonomic scope" value="Eukaryota"/>
</dbReference>
<dbReference type="GeneTree" id="ENSGT00390000016820"/>
<dbReference type="InParanoid" id="Q8IV38"/>
<dbReference type="OMA" id="EFPFREC"/>
<dbReference type="OrthoDB" id="10257049at2759"/>
<dbReference type="PAN-GO" id="Q8IV38">
    <property type="GO annotations" value="0 GO annotations based on evolutionary models"/>
</dbReference>
<dbReference type="PhylomeDB" id="Q8IV38"/>
<dbReference type="TreeFam" id="TF351374"/>
<dbReference type="PathwayCommons" id="Q8IV38"/>
<dbReference type="SignaLink" id="Q8IV38"/>
<dbReference type="BioGRID-ORCS" id="57037">
    <property type="hits" value="56 hits in 1153 CRISPR screens"/>
</dbReference>
<dbReference type="ChiTaRS" id="ANKMY2">
    <property type="organism name" value="human"/>
</dbReference>
<dbReference type="GenomeRNAi" id="57037"/>
<dbReference type="Pharos" id="Q8IV38">
    <property type="development level" value="Tdark"/>
</dbReference>
<dbReference type="PRO" id="PR:Q8IV38"/>
<dbReference type="Proteomes" id="UP000005640">
    <property type="component" value="Chromosome 7"/>
</dbReference>
<dbReference type="RNAct" id="Q8IV38">
    <property type="molecule type" value="protein"/>
</dbReference>
<dbReference type="Bgee" id="ENSG00000106524">
    <property type="expression patterns" value="Expressed in middle temporal gyrus and 209 other cell types or tissues"/>
</dbReference>
<dbReference type="ExpressionAtlas" id="Q8IV38">
    <property type="expression patterns" value="baseline and differential"/>
</dbReference>
<dbReference type="GO" id="GO:0005929">
    <property type="term" value="C:cilium"/>
    <property type="evidence" value="ECO:0007669"/>
    <property type="project" value="UniProtKB-SubCell"/>
</dbReference>
<dbReference type="GO" id="GO:0019899">
    <property type="term" value="F:enzyme binding"/>
    <property type="evidence" value="ECO:0007669"/>
    <property type="project" value="Ensembl"/>
</dbReference>
<dbReference type="GO" id="GO:0008270">
    <property type="term" value="F:zinc ion binding"/>
    <property type="evidence" value="ECO:0007669"/>
    <property type="project" value="UniProtKB-KW"/>
</dbReference>
<dbReference type="FunFam" id="1.25.40.20:FF:000182">
    <property type="entry name" value="Ankyrin repeat and MYND domain containing 2a"/>
    <property type="match status" value="1"/>
</dbReference>
<dbReference type="FunFam" id="6.10.140.2220:FF:000010">
    <property type="entry name" value="Ankyrin repeat and MYND domain-containing protein 2"/>
    <property type="match status" value="1"/>
</dbReference>
<dbReference type="Gene3D" id="6.10.140.2220">
    <property type="match status" value="1"/>
</dbReference>
<dbReference type="Gene3D" id="1.25.40.20">
    <property type="entry name" value="Ankyrin repeat-containing domain"/>
    <property type="match status" value="1"/>
</dbReference>
<dbReference type="InterPro" id="IPR052452">
    <property type="entry name" value="Ankyrin-MYND_dom_contain_2"/>
</dbReference>
<dbReference type="InterPro" id="IPR002110">
    <property type="entry name" value="Ankyrin_rpt"/>
</dbReference>
<dbReference type="InterPro" id="IPR036770">
    <property type="entry name" value="Ankyrin_rpt-contain_sf"/>
</dbReference>
<dbReference type="InterPro" id="IPR002893">
    <property type="entry name" value="Znf_MYND"/>
</dbReference>
<dbReference type="PANTHER" id="PTHR24150">
    <property type="entry name" value="ANKYRIN REPEAT AND MYND DOMAIN-CONTAINING PROTEIN 2"/>
    <property type="match status" value="1"/>
</dbReference>
<dbReference type="PANTHER" id="PTHR24150:SF8">
    <property type="entry name" value="ANKYRIN REPEAT AND MYND DOMAIN-CONTAINING PROTEIN 2"/>
    <property type="match status" value="1"/>
</dbReference>
<dbReference type="Pfam" id="PF12796">
    <property type="entry name" value="Ank_2"/>
    <property type="match status" value="1"/>
</dbReference>
<dbReference type="Pfam" id="PF01753">
    <property type="entry name" value="zf-MYND"/>
    <property type="match status" value="1"/>
</dbReference>
<dbReference type="SMART" id="SM00248">
    <property type="entry name" value="ANK"/>
    <property type="match status" value="3"/>
</dbReference>
<dbReference type="SUPFAM" id="SSF48403">
    <property type="entry name" value="Ankyrin repeat"/>
    <property type="match status" value="1"/>
</dbReference>
<dbReference type="SUPFAM" id="SSF144232">
    <property type="entry name" value="HIT/MYND zinc finger-like"/>
    <property type="match status" value="1"/>
</dbReference>
<dbReference type="PROSITE" id="PS50297">
    <property type="entry name" value="ANK_REP_REGION"/>
    <property type="match status" value="1"/>
</dbReference>
<dbReference type="PROSITE" id="PS50088">
    <property type="entry name" value="ANK_REPEAT"/>
    <property type="match status" value="2"/>
</dbReference>
<dbReference type="PROSITE" id="PS01360">
    <property type="entry name" value="ZF_MYND_1"/>
    <property type="match status" value="1"/>
</dbReference>
<dbReference type="PROSITE" id="PS50865">
    <property type="entry name" value="ZF_MYND_2"/>
    <property type="match status" value="1"/>
</dbReference>
<comment type="function">
    <text evidence="1">May be involved in the trafficking of signaling proteins to the cilia.</text>
</comment>
<comment type="subunit">
    <text evidence="1">Interacts with the retinal-specific guanylyl cyclase GC1.</text>
</comment>
<comment type="interaction">
    <interactant intactId="EBI-9393876">
        <id>Q8IV38</id>
    </interactant>
    <interactant intactId="EBI-717399">
        <id>Q9BSI4</id>
        <label>TINF2</label>
    </interactant>
    <organismsDiffer>false</organismsDiffer>
    <experiments>2</experiments>
</comment>
<comment type="subcellular location">
    <subcellularLocation>
        <location evidence="1">Cell projection</location>
        <location evidence="1">Cilium</location>
    </subcellularLocation>
</comment>
<keyword id="KW-0040">ANK repeat</keyword>
<keyword id="KW-0966">Cell projection</keyword>
<keyword id="KW-0969">Cilium</keyword>
<keyword id="KW-0479">Metal-binding</keyword>
<keyword id="KW-1267">Proteomics identification</keyword>
<keyword id="KW-1185">Reference proteome</keyword>
<keyword id="KW-0677">Repeat</keyword>
<keyword id="KW-0862">Zinc</keyword>
<keyword id="KW-0863">Zinc-finger</keyword>
<proteinExistence type="evidence at protein level"/>
<name>ANKY2_HUMAN</name>
<accession>Q8IV38</accession>
<accession>A4D124</accession>
<accession>Q659G1</accession>
<accession>Q96BL3</accession>